<evidence type="ECO:0000250" key="1"/>
<evidence type="ECO:0000255" key="2"/>
<evidence type="ECO:0000255" key="3">
    <source>
        <dbReference type="PROSITE-ProRule" id="PRU00274"/>
    </source>
</evidence>
<evidence type="ECO:0000269" key="4">
    <source>
    </source>
</evidence>
<evidence type="ECO:0000305" key="5"/>
<reference key="1">
    <citation type="journal article" date="1993" name="EMBO J.">
        <title>Members of a trypsin gene family in Anopheles gambiae are induced in the gut by blood meal.</title>
        <authorList>
            <person name="Mueller H.-M."/>
            <person name="Crampton J.M."/>
            <person name="della Torre A."/>
            <person name="Sinden R."/>
            <person name="Crisanti A."/>
        </authorList>
    </citation>
    <scope>NUCLEOTIDE SEQUENCE [MRNA]</scope>
    <scope>FUNCTION</scope>
    <scope>SUBCELLULAR LOCATION</scope>
    <scope>TISSUE SPECIFICITY</scope>
    <scope>INDUCTION</scope>
    <source>
        <strain>Suakoko</strain>
        <tissue>Midgut</tissue>
    </source>
</reference>
<reference key="2">
    <citation type="journal article" date="1995" name="Exp. Parasitol.">
        <title>Constitutive and blood meal-induced trypsin genes in Anopheles gambiae.</title>
        <authorList>
            <person name="Mueller H.-M."/>
            <person name="Catteruccia F."/>
            <person name="Vizioli J."/>
            <person name="della Torre A."/>
            <person name="Crisanti A."/>
        </authorList>
    </citation>
    <scope>NUCLEOTIDE SEQUENCE [GENOMIC DNA]</scope>
    <source>
        <strain>Suakoko</strain>
        <tissue>Midgut</tissue>
    </source>
</reference>
<reference key="3">
    <citation type="journal article" date="2002" name="Science">
        <title>The genome sequence of the malaria mosquito Anopheles gambiae.</title>
        <authorList>
            <person name="Holt R.A."/>
            <person name="Subramanian G.M."/>
            <person name="Halpern A."/>
            <person name="Sutton G.G."/>
            <person name="Charlab R."/>
            <person name="Nusskern D.R."/>
            <person name="Wincker P."/>
            <person name="Clark A.G."/>
            <person name="Ribeiro J.M.C."/>
            <person name="Wides R."/>
            <person name="Salzberg S.L."/>
            <person name="Loftus B.J."/>
            <person name="Yandell M.D."/>
            <person name="Majoros W.H."/>
            <person name="Rusch D.B."/>
            <person name="Lai Z."/>
            <person name="Kraft C.L."/>
            <person name="Abril J.F."/>
            <person name="Anthouard V."/>
            <person name="Arensburger P."/>
            <person name="Atkinson P.W."/>
            <person name="Baden H."/>
            <person name="de Berardinis V."/>
            <person name="Baldwin D."/>
            <person name="Benes V."/>
            <person name="Biedler J."/>
            <person name="Blass C."/>
            <person name="Bolanos R."/>
            <person name="Boscus D."/>
            <person name="Barnstead M."/>
            <person name="Cai S."/>
            <person name="Center A."/>
            <person name="Chaturverdi K."/>
            <person name="Christophides G.K."/>
            <person name="Chrystal M.A.M."/>
            <person name="Clamp M."/>
            <person name="Cravchik A."/>
            <person name="Curwen V."/>
            <person name="Dana A."/>
            <person name="Delcher A."/>
            <person name="Dew I."/>
            <person name="Evans C.A."/>
            <person name="Flanigan M."/>
            <person name="Grundschober-Freimoser A."/>
            <person name="Friedli L."/>
            <person name="Gu Z."/>
            <person name="Guan P."/>
            <person name="Guigo R."/>
            <person name="Hillenmeyer M.E."/>
            <person name="Hladun S.L."/>
            <person name="Hogan J.R."/>
            <person name="Hong Y.S."/>
            <person name="Hoover J."/>
            <person name="Jaillon O."/>
            <person name="Ke Z."/>
            <person name="Kodira C.D."/>
            <person name="Kokoza E."/>
            <person name="Koutsos A."/>
            <person name="Letunic I."/>
            <person name="Levitsky A.A."/>
            <person name="Liang Y."/>
            <person name="Lin J.-J."/>
            <person name="Lobo N.F."/>
            <person name="Lopez J.R."/>
            <person name="Malek J.A."/>
            <person name="McIntosh T.C."/>
            <person name="Meister S."/>
            <person name="Miller J.R."/>
            <person name="Mobarry C."/>
            <person name="Mongin E."/>
            <person name="Murphy S.D."/>
            <person name="O'Brochta D.A."/>
            <person name="Pfannkoch C."/>
            <person name="Qi R."/>
            <person name="Regier M.A."/>
            <person name="Remington K."/>
            <person name="Shao H."/>
            <person name="Sharakhova M.V."/>
            <person name="Sitter C.D."/>
            <person name="Shetty J."/>
            <person name="Smith T.J."/>
            <person name="Strong R."/>
            <person name="Sun J."/>
            <person name="Thomasova D."/>
            <person name="Ton L.Q."/>
            <person name="Topalis P."/>
            <person name="Tu Z.J."/>
            <person name="Unger M.F."/>
            <person name="Walenz B."/>
            <person name="Wang A.H."/>
            <person name="Wang J."/>
            <person name="Wang M."/>
            <person name="Wang X."/>
            <person name="Woodford K.J."/>
            <person name="Wortman J.R."/>
            <person name="Wu M."/>
            <person name="Yao A."/>
            <person name="Zdobnov E.M."/>
            <person name="Zhang H."/>
            <person name="Zhao Q."/>
            <person name="Zhao S."/>
            <person name="Zhu S.C."/>
            <person name="Zhimulev I."/>
            <person name="Coluzzi M."/>
            <person name="della Torre A."/>
            <person name="Roth C.W."/>
            <person name="Louis C."/>
            <person name="Kalush F."/>
            <person name="Mural R.J."/>
            <person name="Myers E.W."/>
            <person name="Adams M.D."/>
            <person name="Smith H.O."/>
            <person name="Broder S."/>
            <person name="Gardner M.J."/>
            <person name="Fraser C.M."/>
            <person name="Birney E."/>
            <person name="Bork P."/>
            <person name="Brey P.T."/>
            <person name="Venter J.C."/>
            <person name="Weissenbach J."/>
            <person name="Kafatos F.C."/>
            <person name="Collins F.H."/>
            <person name="Hoffman S.L."/>
        </authorList>
    </citation>
    <scope>NUCLEOTIDE SEQUENCE [LARGE SCALE GENOMIC DNA]</scope>
    <source>
        <strain>PEST</strain>
    </source>
</reference>
<keyword id="KW-0222">Digestion</keyword>
<keyword id="KW-1015">Disulfide bond</keyword>
<keyword id="KW-0378">Hydrolase</keyword>
<keyword id="KW-0645">Protease</keyword>
<keyword id="KW-1185">Reference proteome</keyword>
<keyword id="KW-0964">Secreted</keyword>
<keyword id="KW-0720">Serine protease</keyword>
<keyword id="KW-0732">Signal</keyword>
<keyword id="KW-0865">Zymogen</keyword>
<accession>P35036</accession>
<accession>Q5TQD2</accession>
<comment type="function">
    <text evidence="4">Major function may be to aid in digestion of the blood meal.</text>
</comment>
<comment type="catalytic activity">
    <reaction>
        <text>Preferential cleavage: Arg-|-Xaa, Lys-|-Xaa.</text>
        <dbReference type="EC" id="3.4.21.4"/>
    </reaction>
</comment>
<comment type="subcellular location">
    <subcellularLocation>
        <location evidence="4">Secreted</location>
    </subcellularLocation>
</comment>
<comment type="tissue specificity">
    <text evidence="4">Midgut.</text>
</comment>
<comment type="induction">
    <text evidence="4">By blood meal.</text>
</comment>
<comment type="similarity">
    <text evidence="3">Belongs to the peptidase S1 family.</text>
</comment>
<name>TRY2_ANOGA</name>
<proteinExistence type="evidence at transcript level"/>
<gene>
    <name type="primary">TRYP2</name>
    <name type="ORF">AGAP008295</name>
</gene>
<dbReference type="EC" id="3.4.21.4"/>
<dbReference type="EMBL" id="Z18890">
    <property type="protein sequence ID" value="CAA79328.1"/>
    <property type="molecule type" value="mRNA"/>
</dbReference>
<dbReference type="EMBL" id="Z22930">
    <property type="protein sequence ID" value="CAA80518.1"/>
    <property type="molecule type" value="Genomic_DNA"/>
</dbReference>
<dbReference type="EMBL" id="AAAB01008964">
    <property type="protein sequence ID" value="EAL39600.1"/>
    <property type="molecule type" value="Genomic_DNA"/>
</dbReference>
<dbReference type="PIR" id="S35340">
    <property type="entry name" value="S35340"/>
</dbReference>
<dbReference type="RefSeq" id="XP_555167.1">
    <property type="nucleotide sequence ID" value="XM_555167.2"/>
</dbReference>
<dbReference type="SMR" id="P35036"/>
<dbReference type="FunCoup" id="P35036">
    <property type="interactions" value="55"/>
</dbReference>
<dbReference type="MEROPS" id="S01.130"/>
<dbReference type="PaxDb" id="7165-AGAP008295-PA"/>
<dbReference type="EnsemblMetazoa" id="AGAP008295-RA">
    <property type="protein sequence ID" value="AGAP008295-PA"/>
    <property type="gene ID" value="AGAP008295"/>
</dbReference>
<dbReference type="GeneID" id="3291694"/>
<dbReference type="KEGG" id="aga:3291694"/>
<dbReference type="VEuPathDB" id="VectorBase:AGAMI1_013239"/>
<dbReference type="VEuPathDB" id="VectorBase:AGAP008295"/>
<dbReference type="eggNOG" id="KOG3627">
    <property type="taxonomic scope" value="Eukaryota"/>
</dbReference>
<dbReference type="HOGENOM" id="CLU_006842_7_0_1"/>
<dbReference type="InParanoid" id="P35036"/>
<dbReference type="OMA" id="HCADDND"/>
<dbReference type="PhylomeDB" id="P35036"/>
<dbReference type="Proteomes" id="UP000007062">
    <property type="component" value="Chromosome 3R"/>
</dbReference>
<dbReference type="GO" id="GO:0005576">
    <property type="term" value="C:extracellular region"/>
    <property type="evidence" value="ECO:0007669"/>
    <property type="project" value="UniProtKB-SubCell"/>
</dbReference>
<dbReference type="GO" id="GO:0004252">
    <property type="term" value="F:serine-type endopeptidase activity"/>
    <property type="evidence" value="ECO:0000318"/>
    <property type="project" value="GO_Central"/>
</dbReference>
<dbReference type="GO" id="GO:0007586">
    <property type="term" value="P:digestion"/>
    <property type="evidence" value="ECO:0007669"/>
    <property type="project" value="UniProtKB-KW"/>
</dbReference>
<dbReference type="GO" id="GO:0006508">
    <property type="term" value="P:proteolysis"/>
    <property type="evidence" value="ECO:0007669"/>
    <property type="project" value="UniProtKB-KW"/>
</dbReference>
<dbReference type="CDD" id="cd00190">
    <property type="entry name" value="Tryp_SPc"/>
    <property type="match status" value="1"/>
</dbReference>
<dbReference type="FunFam" id="2.40.10.10:FF:000077">
    <property type="entry name" value="Predicted protein"/>
    <property type="match status" value="1"/>
</dbReference>
<dbReference type="Gene3D" id="2.40.10.10">
    <property type="entry name" value="Trypsin-like serine proteases"/>
    <property type="match status" value="1"/>
</dbReference>
<dbReference type="InterPro" id="IPR050430">
    <property type="entry name" value="Peptidase_S1"/>
</dbReference>
<dbReference type="InterPro" id="IPR009003">
    <property type="entry name" value="Peptidase_S1_PA"/>
</dbReference>
<dbReference type="InterPro" id="IPR043504">
    <property type="entry name" value="Peptidase_S1_PA_chymotrypsin"/>
</dbReference>
<dbReference type="InterPro" id="IPR001314">
    <property type="entry name" value="Peptidase_S1A"/>
</dbReference>
<dbReference type="InterPro" id="IPR001254">
    <property type="entry name" value="Trypsin_dom"/>
</dbReference>
<dbReference type="InterPro" id="IPR018114">
    <property type="entry name" value="TRYPSIN_HIS"/>
</dbReference>
<dbReference type="InterPro" id="IPR033116">
    <property type="entry name" value="TRYPSIN_SER"/>
</dbReference>
<dbReference type="PANTHER" id="PTHR24276:SF97">
    <property type="entry name" value="GH13245P2-RELATED"/>
    <property type="match status" value="1"/>
</dbReference>
<dbReference type="PANTHER" id="PTHR24276">
    <property type="entry name" value="POLYSERASE-RELATED"/>
    <property type="match status" value="1"/>
</dbReference>
<dbReference type="Pfam" id="PF00089">
    <property type="entry name" value="Trypsin"/>
    <property type="match status" value="1"/>
</dbReference>
<dbReference type="PRINTS" id="PR00722">
    <property type="entry name" value="CHYMOTRYPSIN"/>
</dbReference>
<dbReference type="SMART" id="SM00020">
    <property type="entry name" value="Tryp_SPc"/>
    <property type="match status" value="1"/>
</dbReference>
<dbReference type="SUPFAM" id="SSF50494">
    <property type="entry name" value="Trypsin-like serine proteases"/>
    <property type="match status" value="1"/>
</dbReference>
<dbReference type="PROSITE" id="PS50240">
    <property type="entry name" value="TRYPSIN_DOM"/>
    <property type="match status" value="1"/>
</dbReference>
<dbReference type="PROSITE" id="PS00134">
    <property type="entry name" value="TRYPSIN_HIS"/>
    <property type="match status" value="1"/>
</dbReference>
<dbReference type="PROSITE" id="PS00135">
    <property type="entry name" value="TRYPSIN_SER"/>
    <property type="match status" value="1"/>
</dbReference>
<feature type="signal peptide" evidence="2">
    <location>
        <begin position="1"/>
        <end position="19"/>
    </location>
</feature>
<feature type="propeptide" id="PRO_0000028245" description="Activation peptide">
    <location>
        <begin position="20"/>
        <end position="50"/>
    </location>
</feature>
<feature type="chain" id="PRO_0000028246" description="Trypsin-2">
    <location>
        <begin position="51"/>
        <end position="277"/>
    </location>
</feature>
<feature type="domain" description="Peptidase S1" evidence="3">
    <location>
        <begin position="51"/>
        <end position="276"/>
    </location>
</feature>
<feature type="active site" description="Charge relay system" evidence="1">
    <location>
        <position position="91"/>
    </location>
</feature>
<feature type="active site" description="Charge relay system" evidence="1">
    <location>
        <position position="136"/>
    </location>
</feature>
<feature type="active site" description="Charge relay system" evidence="1">
    <location>
        <position position="232"/>
    </location>
</feature>
<feature type="site" description="Required for specificity" evidence="1">
    <location>
        <position position="226"/>
    </location>
</feature>
<feature type="disulfide bond" evidence="3">
    <location>
        <begin position="76"/>
        <end position="92"/>
    </location>
</feature>
<feature type="disulfide bond" evidence="3">
    <location>
        <begin position="201"/>
        <end position="217"/>
    </location>
</feature>
<feature type="disulfide bond" evidence="3">
    <location>
        <begin position="228"/>
        <end position="252"/>
    </location>
</feature>
<feature type="sequence conflict" description="In Ref. 1; CAA79328 and 2; CAA80518." evidence="5" ref="1 2">
    <original>V</original>
    <variation>L</variation>
    <location>
        <position position="13"/>
    </location>
</feature>
<feature type="sequence conflict" description="In Ref. 1; CAA79328 and 2; CAA80518." evidence="5" ref="1 2">
    <original>R</original>
    <variation>G</variation>
    <location>
        <position position="26"/>
    </location>
</feature>
<feature type="sequence conflict" description="In Ref. 1; CAA79328 and 2; CAA80518." evidence="5" ref="1 2">
    <original>Y</original>
    <variation>F</variation>
    <location>
        <position position="135"/>
    </location>
</feature>
<feature type="sequence conflict" description="In Ref. 1; CAA79328 and 2; CAA80518." evidence="5" ref="1 2">
    <original>A</original>
    <variation>L</variation>
    <location>
        <position position="151"/>
    </location>
</feature>
<organism>
    <name type="scientific">Anopheles gambiae</name>
    <name type="common">African malaria mosquito</name>
    <dbReference type="NCBI Taxonomy" id="7165"/>
    <lineage>
        <taxon>Eukaryota</taxon>
        <taxon>Metazoa</taxon>
        <taxon>Ecdysozoa</taxon>
        <taxon>Arthropoda</taxon>
        <taxon>Hexapoda</taxon>
        <taxon>Insecta</taxon>
        <taxon>Pterygota</taxon>
        <taxon>Neoptera</taxon>
        <taxon>Endopterygota</taxon>
        <taxon>Diptera</taxon>
        <taxon>Nematocera</taxon>
        <taxon>Culicoidea</taxon>
        <taxon>Culicidae</taxon>
        <taxon>Anophelinae</taxon>
        <taxon>Anopheles</taxon>
    </lineage>
</organism>
<protein>
    <recommendedName>
        <fullName>Trypsin-2</fullName>
        <ecNumber>3.4.21.4</ecNumber>
    </recommendedName>
    <alternativeName>
        <fullName>Antryp2</fullName>
    </alternativeName>
</protein>
<sequence>MSNKIAILLLAVVVAVVACAQAQPSRRHHLVHPLLPRFLPRLHRDSNGHRVVGGFQIDVSDAPYQVSLQYFNSHRCGGSVLDNKWVLTAAHCTQGLDPSSLAVRLGSSEHATGGTLVGVLRTVEHPQYDGNTIDYDFSLMELETELTFSDAVQPVELPEHEEPVEPGTMATVSGWGNTQSAVESSDFLRAANVPTVSHEDCSDAYMWFGEITDRMLCAGYQQGGKDACQGDSGGPLVADGKLVGVVSWGYGCAQPGYPGVYGRVASVRDWVRENSGV</sequence>